<evidence type="ECO:0000255" key="1">
    <source>
        <dbReference type="HAMAP-Rule" id="MF_00815"/>
    </source>
</evidence>
<keyword id="KW-0066">ATP synthesis</keyword>
<keyword id="KW-0997">Cell inner membrane</keyword>
<keyword id="KW-1003">Cell membrane</keyword>
<keyword id="KW-0139">CF(1)</keyword>
<keyword id="KW-0375">Hydrogen ion transport</keyword>
<keyword id="KW-0406">Ion transport</keyword>
<keyword id="KW-0472">Membrane</keyword>
<keyword id="KW-0813">Transport</keyword>
<proteinExistence type="inferred from homology"/>
<sequence>MAGAKEIRTKIASVKNTQKITKAMEMVATSKMRKTQERMAASRPYSETIRKVISHIAKGSIGYKHPFLTERDIKKVGYLVVSTDRGLCGGLNINLFKATLNEFKTWKDKDVSVELGLVGSKGVSFYQNLGLNVRSQVTGLGDNPEMERIVGAVNEMINAFRNGEVDAVYVAYNRFENTMSQKPVIAQLLPLPKLDDDELDTKGSWDYIYEPNPQVLLDSLLVRYLETQVYQAVVDNLASEQAARMVAMKAATDNAGTLIDELQLVYNKARQASITNELNEIVAGAAAI</sequence>
<feature type="chain" id="PRO_1000134100" description="ATP synthase gamma chain">
    <location>
        <begin position="1"/>
        <end position="288"/>
    </location>
</feature>
<name>ATPG_ACTP7</name>
<organism>
    <name type="scientific">Actinobacillus pleuropneumoniae serotype 7 (strain AP76)</name>
    <dbReference type="NCBI Taxonomy" id="537457"/>
    <lineage>
        <taxon>Bacteria</taxon>
        <taxon>Pseudomonadati</taxon>
        <taxon>Pseudomonadota</taxon>
        <taxon>Gammaproteobacteria</taxon>
        <taxon>Pasteurellales</taxon>
        <taxon>Pasteurellaceae</taxon>
        <taxon>Actinobacillus</taxon>
    </lineage>
</organism>
<accession>B3H2P4</accession>
<comment type="function">
    <text evidence="1">Produces ATP from ADP in the presence of a proton gradient across the membrane. The gamma chain is believed to be important in regulating ATPase activity and the flow of protons through the CF(0) complex.</text>
</comment>
<comment type="subunit">
    <text evidence="1">F-type ATPases have 2 components, CF(1) - the catalytic core - and CF(0) - the membrane proton channel. CF(1) has five subunits: alpha(3), beta(3), gamma(1), delta(1), epsilon(1). CF(0) has three main subunits: a, b and c.</text>
</comment>
<comment type="subcellular location">
    <subcellularLocation>
        <location evidence="1">Cell inner membrane</location>
        <topology evidence="1">Peripheral membrane protein</topology>
    </subcellularLocation>
</comment>
<comment type="similarity">
    <text evidence="1">Belongs to the ATPase gamma chain family.</text>
</comment>
<protein>
    <recommendedName>
        <fullName evidence="1">ATP synthase gamma chain</fullName>
    </recommendedName>
    <alternativeName>
        <fullName evidence="1">ATP synthase F1 sector gamma subunit</fullName>
    </alternativeName>
    <alternativeName>
        <fullName evidence="1">F-ATPase gamma subunit</fullName>
    </alternativeName>
</protein>
<gene>
    <name evidence="1" type="primary">atpG</name>
    <name type="ordered locus">APP7_1709</name>
</gene>
<dbReference type="EMBL" id="CP001091">
    <property type="protein sequence ID" value="ACE62361.1"/>
    <property type="molecule type" value="Genomic_DNA"/>
</dbReference>
<dbReference type="RefSeq" id="WP_005599063.1">
    <property type="nucleotide sequence ID" value="NC_010939.1"/>
</dbReference>
<dbReference type="SMR" id="B3H2P4"/>
<dbReference type="GeneID" id="48599937"/>
<dbReference type="KEGG" id="apa:APP7_1709"/>
<dbReference type="HOGENOM" id="CLU_050669_0_1_6"/>
<dbReference type="Proteomes" id="UP000001226">
    <property type="component" value="Chromosome"/>
</dbReference>
<dbReference type="GO" id="GO:0005886">
    <property type="term" value="C:plasma membrane"/>
    <property type="evidence" value="ECO:0007669"/>
    <property type="project" value="UniProtKB-SubCell"/>
</dbReference>
<dbReference type="GO" id="GO:0045259">
    <property type="term" value="C:proton-transporting ATP synthase complex"/>
    <property type="evidence" value="ECO:0007669"/>
    <property type="project" value="UniProtKB-KW"/>
</dbReference>
<dbReference type="GO" id="GO:0005524">
    <property type="term" value="F:ATP binding"/>
    <property type="evidence" value="ECO:0007669"/>
    <property type="project" value="UniProtKB-UniRule"/>
</dbReference>
<dbReference type="GO" id="GO:0046933">
    <property type="term" value="F:proton-transporting ATP synthase activity, rotational mechanism"/>
    <property type="evidence" value="ECO:0007669"/>
    <property type="project" value="UniProtKB-UniRule"/>
</dbReference>
<dbReference type="GO" id="GO:0042777">
    <property type="term" value="P:proton motive force-driven plasma membrane ATP synthesis"/>
    <property type="evidence" value="ECO:0007669"/>
    <property type="project" value="UniProtKB-UniRule"/>
</dbReference>
<dbReference type="CDD" id="cd12151">
    <property type="entry name" value="F1-ATPase_gamma"/>
    <property type="match status" value="1"/>
</dbReference>
<dbReference type="FunFam" id="1.10.287.80:FF:000005">
    <property type="entry name" value="ATP synthase gamma chain"/>
    <property type="match status" value="2"/>
</dbReference>
<dbReference type="FunFam" id="3.40.1380.10:FF:000006">
    <property type="entry name" value="ATP synthase gamma chain"/>
    <property type="match status" value="1"/>
</dbReference>
<dbReference type="Gene3D" id="3.40.1380.10">
    <property type="match status" value="1"/>
</dbReference>
<dbReference type="Gene3D" id="1.10.287.80">
    <property type="entry name" value="ATP synthase, gamma subunit, helix hairpin domain"/>
    <property type="match status" value="2"/>
</dbReference>
<dbReference type="HAMAP" id="MF_00815">
    <property type="entry name" value="ATP_synth_gamma_bact"/>
    <property type="match status" value="1"/>
</dbReference>
<dbReference type="InterPro" id="IPR035968">
    <property type="entry name" value="ATP_synth_F1_ATPase_gsu"/>
</dbReference>
<dbReference type="InterPro" id="IPR000131">
    <property type="entry name" value="ATP_synth_F1_gsu"/>
</dbReference>
<dbReference type="InterPro" id="IPR023632">
    <property type="entry name" value="ATP_synth_F1_gsu_CS"/>
</dbReference>
<dbReference type="NCBIfam" id="TIGR01146">
    <property type="entry name" value="ATPsyn_F1gamma"/>
    <property type="match status" value="1"/>
</dbReference>
<dbReference type="NCBIfam" id="NF004144">
    <property type="entry name" value="PRK05621.1-1"/>
    <property type="match status" value="1"/>
</dbReference>
<dbReference type="PANTHER" id="PTHR11693">
    <property type="entry name" value="ATP SYNTHASE GAMMA CHAIN"/>
    <property type="match status" value="1"/>
</dbReference>
<dbReference type="PANTHER" id="PTHR11693:SF22">
    <property type="entry name" value="ATP SYNTHASE SUBUNIT GAMMA, MITOCHONDRIAL"/>
    <property type="match status" value="1"/>
</dbReference>
<dbReference type="Pfam" id="PF00231">
    <property type="entry name" value="ATP-synt"/>
    <property type="match status" value="1"/>
</dbReference>
<dbReference type="PRINTS" id="PR00126">
    <property type="entry name" value="ATPASEGAMMA"/>
</dbReference>
<dbReference type="SUPFAM" id="SSF52943">
    <property type="entry name" value="ATP synthase (F1-ATPase), gamma subunit"/>
    <property type="match status" value="1"/>
</dbReference>
<dbReference type="PROSITE" id="PS00153">
    <property type="entry name" value="ATPASE_GAMMA"/>
    <property type="match status" value="1"/>
</dbReference>
<reference key="1">
    <citation type="submission" date="2008-06" db="EMBL/GenBank/DDBJ databases">
        <title>Genome and proteome analysis of A. pleuropneumoniae serotype 7.</title>
        <authorList>
            <person name="Linke B."/>
            <person name="Buettner F."/>
            <person name="Martinez-Arias R."/>
            <person name="Goesmann A."/>
            <person name="Baltes N."/>
            <person name="Tegetmeyer H."/>
            <person name="Singh M."/>
            <person name="Gerlach G.F."/>
        </authorList>
    </citation>
    <scope>NUCLEOTIDE SEQUENCE [LARGE SCALE GENOMIC DNA]</scope>
    <source>
        <strain>AP76</strain>
    </source>
</reference>